<name>RECR_DESHY</name>
<sequence>MDFLNYPEPLADLITGLSRLPGIGPKTAGRLAFYLLQQPQVAENLAETMIRAQREIRQCSLCCNYTDHDPCPICTGEKRERTLLCIVEQPRDVVSLEKTREFKGLYHVLHGVISPLEGVGPEQLTISKLLGRLEGVQEVVMAMNPTVEGEATALYLSRLLKPLGIKVTRIAHGLPVGGDLEYADEITIARALEGRRQI</sequence>
<evidence type="ECO:0000255" key="1">
    <source>
        <dbReference type="HAMAP-Rule" id="MF_00017"/>
    </source>
</evidence>
<proteinExistence type="inferred from homology"/>
<keyword id="KW-0227">DNA damage</keyword>
<keyword id="KW-0233">DNA recombination</keyword>
<keyword id="KW-0234">DNA repair</keyword>
<keyword id="KW-0479">Metal-binding</keyword>
<keyword id="KW-1185">Reference proteome</keyword>
<keyword id="KW-0862">Zinc</keyword>
<keyword id="KW-0863">Zinc-finger</keyword>
<reference key="1">
    <citation type="journal article" date="2006" name="J. Bacteriol.">
        <title>Complete genome sequence of the dehalorespiring bacterium Desulfitobacterium hafniense Y51 and comparison with Dehalococcoides ethenogenes 195.</title>
        <authorList>
            <person name="Nonaka H."/>
            <person name="Keresztes G."/>
            <person name="Shinoda Y."/>
            <person name="Ikenaga Y."/>
            <person name="Abe M."/>
            <person name="Naito K."/>
            <person name="Inatomi K."/>
            <person name="Furukawa K."/>
            <person name="Inui M."/>
            <person name="Yukawa H."/>
        </authorList>
    </citation>
    <scope>NUCLEOTIDE SEQUENCE [LARGE SCALE GENOMIC DNA]</scope>
    <source>
        <strain>Y51</strain>
    </source>
</reference>
<accession>Q251Z0</accession>
<dbReference type="EMBL" id="AP008230">
    <property type="protein sequence ID" value="BAE81902.1"/>
    <property type="molecule type" value="Genomic_DNA"/>
</dbReference>
<dbReference type="RefSeq" id="WP_011458897.1">
    <property type="nucleotide sequence ID" value="NC_007907.1"/>
</dbReference>
<dbReference type="SMR" id="Q251Z0"/>
<dbReference type="STRING" id="138119.DSY0113"/>
<dbReference type="KEGG" id="dsy:DSY0113"/>
<dbReference type="eggNOG" id="COG0353">
    <property type="taxonomic scope" value="Bacteria"/>
</dbReference>
<dbReference type="HOGENOM" id="CLU_060739_1_1_9"/>
<dbReference type="Proteomes" id="UP000001946">
    <property type="component" value="Chromosome"/>
</dbReference>
<dbReference type="GO" id="GO:0003677">
    <property type="term" value="F:DNA binding"/>
    <property type="evidence" value="ECO:0007669"/>
    <property type="project" value="UniProtKB-UniRule"/>
</dbReference>
<dbReference type="GO" id="GO:0008270">
    <property type="term" value="F:zinc ion binding"/>
    <property type="evidence" value="ECO:0007669"/>
    <property type="project" value="UniProtKB-KW"/>
</dbReference>
<dbReference type="GO" id="GO:0006310">
    <property type="term" value="P:DNA recombination"/>
    <property type="evidence" value="ECO:0007669"/>
    <property type="project" value="UniProtKB-UniRule"/>
</dbReference>
<dbReference type="GO" id="GO:0006281">
    <property type="term" value="P:DNA repair"/>
    <property type="evidence" value="ECO:0007669"/>
    <property type="project" value="UniProtKB-UniRule"/>
</dbReference>
<dbReference type="CDD" id="cd01025">
    <property type="entry name" value="TOPRIM_recR"/>
    <property type="match status" value="1"/>
</dbReference>
<dbReference type="Gene3D" id="3.30.60.80">
    <property type="match status" value="1"/>
</dbReference>
<dbReference type="Gene3D" id="3.40.1360.10">
    <property type="match status" value="1"/>
</dbReference>
<dbReference type="Gene3D" id="6.10.250.240">
    <property type="match status" value="1"/>
</dbReference>
<dbReference type="Gene3D" id="1.10.8.420">
    <property type="entry name" value="RecR Domain 1"/>
    <property type="match status" value="1"/>
</dbReference>
<dbReference type="HAMAP" id="MF_00017">
    <property type="entry name" value="RecR"/>
    <property type="match status" value="1"/>
</dbReference>
<dbReference type="InterPro" id="IPR000093">
    <property type="entry name" value="DNA_Rcmb_RecR"/>
</dbReference>
<dbReference type="InterPro" id="IPR023627">
    <property type="entry name" value="Rcmb_RecR"/>
</dbReference>
<dbReference type="InterPro" id="IPR015967">
    <property type="entry name" value="Rcmb_RecR_Znf"/>
</dbReference>
<dbReference type="InterPro" id="IPR006171">
    <property type="entry name" value="TOPRIM_dom"/>
</dbReference>
<dbReference type="InterPro" id="IPR034137">
    <property type="entry name" value="TOPRIM_RecR"/>
</dbReference>
<dbReference type="NCBIfam" id="TIGR00615">
    <property type="entry name" value="recR"/>
    <property type="match status" value="1"/>
</dbReference>
<dbReference type="PANTHER" id="PTHR30446">
    <property type="entry name" value="RECOMBINATION PROTEIN RECR"/>
    <property type="match status" value="1"/>
</dbReference>
<dbReference type="PANTHER" id="PTHR30446:SF0">
    <property type="entry name" value="RECOMBINATION PROTEIN RECR"/>
    <property type="match status" value="1"/>
</dbReference>
<dbReference type="Pfam" id="PF21175">
    <property type="entry name" value="RecR_C"/>
    <property type="match status" value="1"/>
</dbReference>
<dbReference type="Pfam" id="PF21176">
    <property type="entry name" value="RecR_HhH"/>
    <property type="match status" value="1"/>
</dbReference>
<dbReference type="Pfam" id="PF02132">
    <property type="entry name" value="RecR_ZnF"/>
    <property type="match status" value="1"/>
</dbReference>
<dbReference type="Pfam" id="PF13662">
    <property type="entry name" value="Toprim_4"/>
    <property type="match status" value="1"/>
</dbReference>
<dbReference type="SMART" id="SM00493">
    <property type="entry name" value="TOPRIM"/>
    <property type="match status" value="1"/>
</dbReference>
<dbReference type="SUPFAM" id="SSF111304">
    <property type="entry name" value="Recombination protein RecR"/>
    <property type="match status" value="1"/>
</dbReference>
<dbReference type="PROSITE" id="PS50880">
    <property type="entry name" value="TOPRIM"/>
    <property type="match status" value="1"/>
</dbReference>
<organism>
    <name type="scientific">Desulfitobacterium hafniense (strain Y51)</name>
    <dbReference type="NCBI Taxonomy" id="138119"/>
    <lineage>
        <taxon>Bacteria</taxon>
        <taxon>Bacillati</taxon>
        <taxon>Bacillota</taxon>
        <taxon>Clostridia</taxon>
        <taxon>Eubacteriales</taxon>
        <taxon>Desulfitobacteriaceae</taxon>
        <taxon>Desulfitobacterium</taxon>
    </lineage>
</organism>
<protein>
    <recommendedName>
        <fullName evidence="1">Recombination protein RecR</fullName>
    </recommendedName>
</protein>
<gene>
    <name evidence="1" type="primary">recR</name>
    <name type="ordered locus">DSY0113</name>
</gene>
<feature type="chain" id="PRO_0000322886" description="Recombination protein RecR">
    <location>
        <begin position="1"/>
        <end position="198"/>
    </location>
</feature>
<feature type="domain" description="Toprim" evidence="1">
    <location>
        <begin position="82"/>
        <end position="175"/>
    </location>
</feature>
<feature type="zinc finger region" description="C4-type" evidence="1">
    <location>
        <begin position="59"/>
        <end position="74"/>
    </location>
</feature>
<comment type="function">
    <text evidence="1">May play a role in DNA repair. It seems to be involved in an RecBC-independent recombinational process of DNA repair. It may act with RecF and RecO.</text>
</comment>
<comment type="similarity">
    <text evidence="1">Belongs to the RecR family.</text>
</comment>